<evidence type="ECO:0000255" key="1">
    <source>
        <dbReference type="HAMAP-Rule" id="MF_00815"/>
    </source>
</evidence>
<sequence length="283" mass="31165">MASLREIQMRINSTKSTKQITKAMNMVSASKLNRAQAHSAKFQPYMLKMQEVLGTIANGTTGASHPMLEKRPVKKTGYIVITSDRGLAGAYNANVLREVYREINEKHTTDSYVLFVVGKVGVQFFRSRGITVTDAITGLNDSPSYVDVAEIVKRTVSAFTLGEIDELKLCYNHFMSVISQEVKVETLLPLGEIEASSSTTYEYEPSEEQILAELLPRYAESLIFGALLDAKVAEHASRMTAMQSATDNADDLIGRLTLVYNRARQAAITQEITEIVSGAAAQQ</sequence>
<organism>
    <name type="scientific">Exiguobacterium sibiricum (strain DSM 17290 / CCUG 55495 / CIP 109462 / JCM 13490 / 255-15)</name>
    <dbReference type="NCBI Taxonomy" id="262543"/>
    <lineage>
        <taxon>Bacteria</taxon>
        <taxon>Bacillati</taxon>
        <taxon>Bacillota</taxon>
        <taxon>Bacilli</taxon>
        <taxon>Bacillales</taxon>
        <taxon>Bacillales Family XII. Incertae Sedis</taxon>
        <taxon>Exiguobacterium</taxon>
    </lineage>
</organism>
<accession>B1YMR5</accession>
<proteinExistence type="inferred from homology"/>
<dbReference type="EMBL" id="CP001022">
    <property type="protein sequence ID" value="ACB62125.1"/>
    <property type="molecule type" value="Genomic_DNA"/>
</dbReference>
<dbReference type="RefSeq" id="WP_012371541.1">
    <property type="nucleotide sequence ID" value="NC_010556.1"/>
</dbReference>
<dbReference type="SMR" id="B1YMR5"/>
<dbReference type="STRING" id="262543.Exig_2677"/>
<dbReference type="KEGG" id="esi:Exig_2677"/>
<dbReference type="eggNOG" id="COG0224">
    <property type="taxonomic scope" value="Bacteria"/>
</dbReference>
<dbReference type="HOGENOM" id="CLU_050669_0_1_9"/>
<dbReference type="OrthoDB" id="9812769at2"/>
<dbReference type="Proteomes" id="UP000001681">
    <property type="component" value="Chromosome"/>
</dbReference>
<dbReference type="GO" id="GO:0005886">
    <property type="term" value="C:plasma membrane"/>
    <property type="evidence" value="ECO:0007669"/>
    <property type="project" value="UniProtKB-SubCell"/>
</dbReference>
<dbReference type="GO" id="GO:0045259">
    <property type="term" value="C:proton-transporting ATP synthase complex"/>
    <property type="evidence" value="ECO:0007669"/>
    <property type="project" value="UniProtKB-KW"/>
</dbReference>
<dbReference type="GO" id="GO:0005524">
    <property type="term" value="F:ATP binding"/>
    <property type="evidence" value="ECO:0007669"/>
    <property type="project" value="UniProtKB-UniRule"/>
</dbReference>
<dbReference type="GO" id="GO:0046933">
    <property type="term" value="F:proton-transporting ATP synthase activity, rotational mechanism"/>
    <property type="evidence" value="ECO:0007669"/>
    <property type="project" value="UniProtKB-UniRule"/>
</dbReference>
<dbReference type="GO" id="GO:0042777">
    <property type="term" value="P:proton motive force-driven plasma membrane ATP synthesis"/>
    <property type="evidence" value="ECO:0007669"/>
    <property type="project" value="UniProtKB-UniRule"/>
</dbReference>
<dbReference type="CDD" id="cd12151">
    <property type="entry name" value="F1-ATPase_gamma"/>
    <property type="match status" value="1"/>
</dbReference>
<dbReference type="FunFam" id="1.10.287.80:FF:000001">
    <property type="entry name" value="ATP synthase gamma chain"/>
    <property type="match status" value="1"/>
</dbReference>
<dbReference type="FunFam" id="3.40.1380.10:FF:000002">
    <property type="entry name" value="ATP synthase gamma chain"/>
    <property type="match status" value="1"/>
</dbReference>
<dbReference type="Gene3D" id="3.40.1380.10">
    <property type="match status" value="1"/>
</dbReference>
<dbReference type="Gene3D" id="1.10.287.80">
    <property type="entry name" value="ATP synthase, gamma subunit, helix hairpin domain"/>
    <property type="match status" value="1"/>
</dbReference>
<dbReference type="HAMAP" id="MF_00815">
    <property type="entry name" value="ATP_synth_gamma_bact"/>
    <property type="match status" value="1"/>
</dbReference>
<dbReference type="InterPro" id="IPR035968">
    <property type="entry name" value="ATP_synth_F1_ATPase_gsu"/>
</dbReference>
<dbReference type="InterPro" id="IPR000131">
    <property type="entry name" value="ATP_synth_F1_gsu"/>
</dbReference>
<dbReference type="InterPro" id="IPR023632">
    <property type="entry name" value="ATP_synth_F1_gsu_CS"/>
</dbReference>
<dbReference type="NCBIfam" id="TIGR01146">
    <property type="entry name" value="ATPsyn_F1gamma"/>
    <property type="match status" value="1"/>
</dbReference>
<dbReference type="PANTHER" id="PTHR11693">
    <property type="entry name" value="ATP SYNTHASE GAMMA CHAIN"/>
    <property type="match status" value="1"/>
</dbReference>
<dbReference type="PANTHER" id="PTHR11693:SF22">
    <property type="entry name" value="ATP SYNTHASE SUBUNIT GAMMA, MITOCHONDRIAL"/>
    <property type="match status" value="1"/>
</dbReference>
<dbReference type="Pfam" id="PF00231">
    <property type="entry name" value="ATP-synt"/>
    <property type="match status" value="1"/>
</dbReference>
<dbReference type="PRINTS" id="PR00126">
    <property type="entry name" value="ATPASEGAMMA"/>
</dbReference>
<dbReference type="SUPFAM" id="SSF52943">
    <property type="entry name" value="ATP synthase (F1-ATPase), gamma subunit"/>
    <property type="match status" value="1"/>
</dbReference>
<dbReference type="PROSITE" id="PS00153">
    <property type="entry name" value="ATPASE_GAMMA"/>
    <property type="match status" value="1"/>
</dbReference>
<feature type="chain" id="PRO_1000134153" description="ATP synthase gamma chain">
    <location>
        <begin position="1"/>
        <end position="283"/>
    </location>
</feature>
<protein>
    <recommendedName>
        <fullName evidence="1">ATP synthase gamma chain</fullName>
    </recommendedName>
    <alternativeName>
        <fullName evidence="1">ATP synthase F1 sector gamma subunit</fullName>
    </alternativeName>
    <alternativeName>
        <fullName evidence="1">F-ATPase gamma subunit</fullName>
    </alternativeName>
</protein>
<gene>
    <name evidence="1" type="primary">atpG</name>
    <name type="ordered locus">Exig_2677</name>
</gene>
<name>ATPG_EXIS2</name>
<keyword id="KW-0066">ATP synthesis</keyword>
<keyword id="KW-1003">Cell membrane</keyword>
<keyword id="KW-0139">CF(1)</keyword>
<keyword id="KW-0375">Hydrogen ion transport</keyword>
<keyword id="KW-0406">Ion transport</keyword>
<keyword id="KW-0472">Membrane</keyword>
<keyword id="KW-1185">Reference proteome</keyword>
<keyword id="KW-0813">Transport</keyword>
<comment type="function">
    <text evidence="1">Produces ATP from ADP in the presence of a proton gradient across the membrane. The gamma chain is believed to be important in regulating ATPase activity and the flow of protons through the CF(0) complex.</text>
</comment>
<comment type="subunit">
    <text evidence="1">F-type ATPases have 2 components, CF(1) - the catalytic core - and CF(0) - the membrane proton channel. CF(1) has five subunits: alpha(3), beta(3), gamma(1), delta(1), epsilon(1). CF(0) has three main subunits: a, b and c.</text>
</comment>
<comment type="subcellular location">
    <subcellularLocation>
        <location evidence="1">Cell membrane</location>
        <topology evidence="1">Peripheral membrane protein</topology>
    </subcellularLocation>
</comment>
<comment type="similarity">
    <text evidence="1">Belongs to the ATPase gamma chain family.</text>
</comment>
<reference key="1">
    <citation type="submission" date="2008-04" db="EMBL/GenBank/DDBJ databases">
        <title>Complete sequence of chromosome of Exiguobacterium sibiricum 255-15.</title>
        <authorList>
            <consortium name="US DOE Joint Genome Institute"/>
            <person name="Copeland A."/>
            <person name="Lucas S."/>
            <person name="Lapidus A."/>
            <person name="Glavina del Rio T."/>
            <person name="Dalin E."/>
            <person name="Tice H."/>
            <person name="Bruce D."/>
            <person name="Goodwin L."/>
            <person name="Pitluck S."/>
            <person name="Kiss H."/>
            <person name="Chertkov O."/>
            <person name="Monk C."/>
            <person name="Brettin T."/>
            <person name="Detter J.C."/>
            <person name="Han C."/>
            <person name="Kuske C.R."/>
            <person name="Schmutz J."/>
            <person name="Larimer F."/>
            <person name="Land M."/>
            <person name="Hauser L."/>
            <person name="Kyrpides N."/>
            <person name="Mikhailova N."/>
            <person name="Vishnivetskaya T."/>
            <person name="Rodrigues D.F."/>
            <person name="Gilichinsky D."/>
            <person name="Tiedje J."/>
            <person name="Richardson P."/>
        </authorList>
    </citation>
    <scope>NUCLEOTIDE SEQUENCE [LARGE SCALE GENOMIC DNA]</scope>
    <source>
        <strain>DSM 17290 / CCUG 55495 / CIP 109462 / JCM 13490 / 255-15</strain>
    </source>
</reference>